<organism>
    <name type="scientific">Staphylococcus aureus (strain N315)</name>
    <dbReference type="NCBI Taxonomy" id="158879"/>
    <lineage>
        <taxon>Bacteria</taxon>
        <taxon>Bacillati</taxon>
        <taxon>Bacillota</taxon>
        <taxon>Bacilli</taxon>
        <taxon>Bacillales</taxon>
        <taxon>Staphylococcaceae</taxon>
        <taxon>Staphylococcus</taxon>
    </lineage>
</organism>
<protein>
    <recommendedName>
        <fullName>Uncharacterized protein SA0907</fullName>
    </recommendedName>
</protein>
<accession>P0A0Q2</accession>
<accession>P52079</accession>
<reference key="1">
    <citation type="journal article" date="2001" name="Lancet">
        <title>Whole genome sequencing of meticillin-resistant Staphylococcus aureus.</title>
        <authorList>
            <person name="Kuroda M."/>
            <person name="Ohta T."/>
            <person name="Uchiyama I."/>
            <person name="Baba T."/>
            <person name="Yuzawa H."/>
            <person name="Kobayashi I."/>
            <person name="Cui L."/>
            <person name="Oguchi A."/>
            <person name="Aoki K."/>
            <person name="Nagai Y."/>
            <person name="Lian J.-Q."/>
            <person name="Ito T."/>
            <person name="Kanamori M."/>
            <person name="Matsumaru H."/>
            <person name="Maruyama A."/>
            <person name="Murakami H."/>
            <person name="Hosoyama A."/>
            <person name="Mizutani-Ui Y."/>
            <person name="Takahashi N.K."/>
            <person name="Sawano T."/>
            <person name="Inoue R."/>
            <person name="Kaito C."/>
            <person name="Sekimizu K."/>
            <person name="Hirakawa H."/>
            <person name="Kuhara S."/>
            <person name="Goto S."/>
            <person name="Yabuzaki J."/>
            <person name="Kanehisa M."/>
            <person name="Yamashita A."/>
            <person name="Oshima K."/>
            <person name="Furuya K."/>
            <person name="Yoshino C."/>
            <person name="Shiba T."/>
            <person name="Hattori M."/>
            <person name="Ogasawara N."/>
            <person name="Hayashi H."/>
            <person name="Hiramatsu K."/>
        </authorList>
    </citation>
    <scope>NUCLEOTIDE SEQUENCE [LARGE SCALE GENOMIC DNA]</scope>
    <source>
        <strain>N315</strain>
    </source>
</reference>
<name>Y907_STAAN</name>
<gene>
    <name type="ordered locus">SA0907</name>
</gene>
<feature type="chain" id="PRO_0000215529" description="Uncharacterized protein SA0907">
    <location>
        <begin position="1"/>
        <end position="156"/>
    </location>
</feature>
<sequence>MSRKTYEKIANINGMFNMLEQQIIHSQDMAHFRSEFFYVNHEHRENYEALLIYYKNSIDNPIVDGACYILALPEIFNSVDVFESELPFSWVYDENGITETMKSLSIPLQYLVAAALEVTDVNIFKPSGFTMGMNNWNIAQMRIFWQYTAIIRKEAL</sequence>
<dbReference type="EMBL" id="BA000018">
    <property type="protein sequence ID" value="BAB42152.1"/>
    <property type="molecule type" value="Genomic_DNA"/>
</dbReference>
<dbReference type="PIR" id="E89874">
    <property type="entry name" value="E89874"/>
</dbReference>
<dbReference type="RefSeq" id="WP_000088431.1">
    <property type="nucleotide sequence ID" value="NC_002745.2"/>
</dbReference>
<dbReference type="SMR" id="P0A0Q2"/>
<dbReference type="EnsemblBacteria" id="BAB42152">
    <property type="protein sequence ID" value="BAB42152"/>
    <property type="gene ID" value="BAB42152"/>
</dbReference>
<dbReference type="KEGG" id="sau:SA0907"/>
<dbReference type="HOGENOM" id="CLU_1685497_0_0_9"/>
<dbReference type="InterPro" id="IPR024469">
    <property type="entry name" value="DUF2538"/>
</dbReference>
<dbReference type="Pfam" id="PF10804">
    <property type="entry name" value="DUF2538"/>
    <property type="match status" value="1"/>
</dbReference>
<proteinExistence type="predicted"/>